<gene>
    <name type="primary">sodC</name>
</gene>
<keyword id="KW-0049">Antioxidant</keyword>
<keyword id="KW-0186">Copper</keyword>
<keyword id="KW-0963">Cytoplasm</keyword>
<keyword id="KW-1015">Disulfide bond</keyword>
<keyword id="KW-0479">Metal-binding</keyword>
<keyword id="KW-0560">Oxidoreductase</keyword>
<keyword id="KW-0862">Zinc</keyword>
<proteinExistence type="inferred from homology"/>
<reference key="1">
    <citation type="submission" date="2000-06" db="EMBL/GenBank/DDBJ databases">
        <title>Homogeneity in 3-dimensional structure of Cu,Zn superoxide dismutases of Aspergillus fumigatus, Aspergillus flavus and Aspergillus nidulans.</title>
        <authorList>
            <person name="Holdom M.D."/>
            <person name="Hobby P."/>
            <person name="Lechenne B."/>
            <person name="Zaugg C."/>
            <person name="Sutton B."/>
            <person name="Monod M."/>
            <person name="Hamilton A.J."/>
        </authorList>
    </citation>
    <scope>NUCLEOTIDE SEQUENCE [GENOMIC DNA]</scope>
</reference>
<dbReference type="EC" id="1.15.1.1" evidence="3"/>
<dbReference type="EMBL" id="AF281059">
    <property type="protein sequence ID" value="AAL38993.1"/>
    <property type="molecule type" value="Genomic_DNA"/>
</dbReference>
<dbReference type="SMR" id="Q8X1S6"/>
<dbReference type="VEuPathDB" id="FungiDB:AFLA_010135"/>
<dbReference type="VEuPathDB" id="FungiDB:F9C07_2286715"/>
<dbReference type="GO" id="GO:0005829">
    <property type="term" value="C:cytosol"/>
    <property type="evidence" value="ECO:0007669"/>
    <property type="project" value="EnsemblFungi"/>
</dbReference>
<dbReference type="GO" id="GO:0005758">
    <property type="term" value="C:mitochondrial intermembrane space"/>
    <property type="evidence" value="ECO:0007669"/>
    <property type="project" value="EnsemblFungi"/>
</dbReference>
<dbReference type="GO" id="GO:0005634">
    <property type="term" value="C:nucleus"/>
    <property type="evidence" value="ECO:0007669"/>
    <property type="project" value="EnsemblFungi"/>
</dbReference>
<dbReference type="GO" id="GO:1902693">
    <property type="term" value="C:superoxide dismutase complex"/>
    <property type="evidence" value="ECO:0007669"/>
    <property type="project" value="EnsemblFungi"/>
</dbReference>
<dbReference type="GO" id="GO:0005507">
    <property type="term" value="F:copper ion binding"/>
    <property type="evidence" value="ECO:0007669"/>
    <property type="project" value="InterPro"/>
</dbReference>
<dbReference type="GO" id="GO:0016670">
    <property type="term" value="F:oxidoreductase activity, acting on a sulfur group of donors, oxygen as acceptor"/>
    <property type="evidence" value="ECO:0007669"/>
    <property type="project" value="EnsemblFungi"/>
</dbReference>
<dbReference type="GO" id="GO:0004784">
    <property type="term" value="F:superoxide dismutase activity"/>
    <property type="evidence" value="ECO:0007669"/>
    <property type="project" value="UniProtKB-EC"/>
</dbReference>
<dbReference type="GO" id="GO:0045454">
    <property type="term" value="P:cell redox homeostasis"/>
    <property type="evidence" value="ECO:0007669"/>
    <property type="project" value="EnsemblFungi"/>
</dbReference>
<dbReference type="GO" id="GO:0006825">
    <property type="term" value="P:copper ion transport"/>
    <property type="evidence" value="ECO:0007669"/>
    <property type="project" value="EnsemblFungi"/>
</dbReference>
<dbReference type="GO" id="GO:0031505">
    <property type="term" value="P:fungal-type cell wall organization"/>
    <property type="evidence" value="ECO:0007669"/>
    <property type="project" value="EnsemblFungi"/>
</dbReference>
<dbReference type="GO" id="GO:0006878">
    <property type="term" value="P:intracellular copper ion homeostasis"/>
    <property type="evidence" value="ECO:0007669"/>
    <property type="project" value="EnsemblFungi"/>
</dbReference>
<dbReference type="GO" id="GO:0006882">
    <property type="term" value="P:intracellular zinc ion homeostasis"/>
    <property type="evidence" value="ECO:0007669"/>
    <property type="project" value="EnsemblFungi"/>
</dbReference>
<dbReference type="GO" id="GO:1901856">
    <property type="term" value="P:negative regulation of cellular respiration"/>
    <property type="evidence" value="ECO:0007669"/>
    <property type="project" value="EnsemblFungi"/>
</dbReference>
<dbReference type="GO" id="GO:0045944">
    <property type="term" value="P:positive regulation of transcription by RNA polymerase II"/>
    <property type="evidence" value="ECO:0007669"/>
    <property type="project" value="EnsemblFungi"/>
</dbReference>
<dbReference type="GO" id="GO:0050821">
    <property type="term" value="P:protein stabilization"/>
    <property type="evidence" value="ECO:0007669"/>
    <property type="project" value="EnsemblFungi"/>
</dbReference>
<dbReference type="CDD" id="cd00305">
    <property type="entry name" value="Cu-Zn_Superoxide_Dismutase"/>
    <property type="match status" value="1"/>
</dbReference>
<dbReference type="FunFam" id="2.60.40.200:FF:000001">
    <property type="entry name" value="Superoxide dismutase [Cu-Zn]"/>
    <property type="match status" value="1"/>
</dbReference>
<dbReference type="Gene3D" id="2.60.40.200">
    <property type="entry name" value="Superoxide dismutase, copper/zinc binding domain"/>
    <property type="match status" value="1"/>
</dbReference>
<dbReference type="InterPro" id="IPR036423">
    <property type="entry name" value="SOD-like_Cu/Zn_dom_sf"/>
</dbReference>
<dbReference type="InterPro" id="IPR024134">
    <property type="entry name" value="SOD_Cu/Zn_/chaperone"/>
</dbReference>
<dbReference type="InterPro" id="IPR018152">
    <property type="entry name" value="SOD_Cu/Zn_BS"/>
</dbReference>
<dbReference type="InterPro" id="IPR001424">
    <property type="entry name" value="SOD_Cu_Zn_dom"/>
</dbReference>
<dbReference type="PANTHER" id="PTHR10003">
    <property type="entry name" value="SUPEROXIDE DISMUTASE CU-ZN -RELATED"/>
    <property type="match status" value="1"/>
</dbReference>
<dbReference type="Pfam" id="PF00080">
    <property type="entry name" value="Sod_Cu"/>
    <property type="match status" value="1"/>
</dbReference>
<dbReference type="PRINTS" id="PR00068">
    <property type="entry name" value="CUZNDISMTASE"/>
</dbReference>
<dbReference type="SUPFAM" id="SSF49329">
    <property type="entry name" value="Cu,Zn superoxide dismutase-like"/>
    <property type="match status" value="1"/>
</dbReference>
<dbReference type="PROSITE" id="PS00087">
    <property type="entry name" value="SOD_CU_ZN_1"/>
    <property type="match status" value="1"/>
</dbReference>
<dbReference type="PROSITE" id="PS00332">
    <property type="entry name" value="SOD_CU_ZN_2"/>
    <property type="match status" value="1"/>
</dbReference>
<accession>Q8X1S6</accession>
<feature type="initiator methionine" description="Removed" evidence="2">
    <location>
        <position position="1"/>
    </location>
</feature>
<feature type="chain" id="PRO_0000164107" description="Superoxide dismutase [Cu-Zn]">
    <location>
        <begin position="2"/>
        <end position="153"/>
    </location>
</feature>
<feature type="region of interest" description="Disordered" evidence="4">
    <location>
        <begin position="61"/>
        <end position="80"/>
    </location>
</feature>
<feature type="region of interest" description="Disordered" evidence="4">
    <location>
        <begin position="124"/>
        <end position="143"/>
    </location>
</feature>
<feature type="compositionally biased region" description="Basic and acidic residues" evidence="4">
    <location>
        <begin position="68"/>
        <end position="80"/>
    </location>
</feature>
<feature type="compositionally biased region" description="Basic and acidic residues" evidence="4">
    <location>
        <begin position="124"/>
        <end position="136"/>
    </location>
</feature>
<feature type="binding site" evidence="2">
    <location>
        <position position="46"/>
    </location>
    <ligand>
        <name>Cu cation</name>
        <dbReference type="ChEBI" id="CHEBI:23378"/>
        <note>catalytic</note>
    </ligand>
</feature>
<feature type="binding site" evidence="2">
    <location>
        <position position="48"/>
    </location>
    <ligand>
        <name>Cu cation</name>
        <dbReference type="ChEBI" id="CHEBI:23378"/>
        <note>catalytic</note>
    </ligand>
</feature>
<feature type="binding site" evidence="2">
    <location>
        <position position="63"/>
    </location>
    <ligand>
        <name>Cu cation</name>
        <dbReference type="ChEBI" id="CHEBI:23378"/>
        <note>catalytic</note>
    </ligand>
</feature>
<feature type="binding site" evidence="2">
    <location>
        <position position="63"/>
    </location>
    <ligand>
        <name>Zn(2+)</name>
        <dbReference type="ChEBI" id="CHEBI:29105"/>
        <note>structural</note>
    </ligand>
</feature>
<feature type="binding site" evidence="2">
    <location>
        <position position="71"/>
    </location>
    <ligand>
        <name>Zn(2+)</name>
        <dbReference type="ChEBI" id="CHEBI:29105"/>
        <note>structural</note>
    </ligand>
</feature>
<feature type="binding site" evidence="2">
    <location>
        <position position="80"/>
    </location>
    <ligand>
        <name>Zn(2+)</name>
        <dbReference type="ChEBI" id="CHEBI:29105"/>
        <note>structural</note>
    </ligand>
</feature>
<feature type="binding site" evidence="2">
    <location>
        <position position="83"/>
    </location>
    <ligand>
        <name>Zn(2+)</name>
        <dbReference type="ChEBI" id="CHEBI:29105"/>
        <note>structural</note>
    </ligand>
</feature>
<feature type="binding site" evidence="2">
    <location>
        <position position="120"/>
    </location>
    <ligand>
        <name>Cu cation</name>
        <dbReference type="ChEBI" id="CHEBI:23378"/>
        <note>catalytic</note>
    </ligand>
</feature>
<feature type="binding site" evidence="2">
    <location>
        <position position="143"/>
    </location>
    <ligand>
        <name>substrate</name>
    </ligand>
</feature>
<feature type="disulfide bond" evidence="2">
    <location>
        <begin position="57"/>
        <end position="146"/>
    </location>
</feature>
<comment type="function">
    <text evidence="1">Destroys radicals which are normally produced within the cells and which are toxic to biological systems.</text>
</comment>
<comment type="catalytic activity">
    <reaction evidence="3">
        <text>2 superoxide + 2 H(+) = H2O2 + O2</text>
        <dbReference type="Rhea" id="RHEA:20696"/>
        <dbReference type="ChEBI" id="CHEBI:15378"/>
        <dbReference type="ChEBI" id="CHEBI:15379"/>
        <dbReference type="ChEBI" id="CHEBI:16240"/>
        <dbReference type="ChEBI" id="CHEBI:18421"/>
        <dbReference type="EC" id="1.15.1.1"/>
    </reaction>
</comment>
<comment type="cofactor">
    <cofactor evidence="2">
        <name>Cu cation</name>
        <dbReference type="ChEBI" id="CHEBI:23378"/>
    </cofactor>
    <text evidence="2">Binds 1 copper ion per subunit.</text>
</comment>
<comment type="cofactor">
    <cofactor evidence="2">
        <name>Zn(2+)</name>
        <dbReference type="ChEBI" id="CHEBI:29105"/>
    </cofactor>
    <text evidence="2">Binds 1 zinc ion per subunit.</text>
</comment>
<comment type="subunit">
    <text evidence="3">Homodimer.</text>
</comment>
<comment type="subcellular location">
    <subcellularLocation>
        <location evidence="2">Cytoplasm</location>
    </subcellularLocation>
</comment>
<comment type="similarity">
    <text evidence="5">Belongs to the Cu-Zn superoxide dismutase family.</text>
</comment>
<name>SODC_ASPFL</name>
<protein>
    <recommendedName>
        <fullName>Superoxide dismutase [Cu-Zn]</fullName>
        <ecNumber evidence="3">1.15.1.1</ecNumber>
    </recommendedName>
</protein>
<evidence type="ECO:0000250" key="1">
    <source>
        <dbReference type="UniProtKB" id="P00442"/>
    </source>
</evidence>
<evidence type="ECO:0000250" key="2">
    <source>
        <dbReference type="UniProtKB" id="P00445"/>
    </source>
</evidence>
<evidence type="ECO:0000250" key="3">
    <source>
        <dbReference type="UniProtKB" id="P85978"/>
    </source>
</evidence>
<evidence type="ECO:0000256" key="4">
    <source>
        <dbReference type="SAM" id="MobiDB-lite"/>
    </source>
</evidence>
<evidence type="ECO:0000305" key="5"/>
<sequence length="153" mass="15895">MVKAVAVRGDSKISGTVTFEQADANAPTTVSWNITGHDANAERAFHVHQFGDNTNGCTSAGPHFNPFGKEHGAPEDENRHVGDLGNFKTDAEGNAVGSKQDKLIKLIGAESVLGRTLVIHAGTDDLGRSEHPESKKTGNAGARPACGVIGIAA</sequence>
<organism>
    <name type="scientific">Aspergillus flavus</name>
    <dbReference type="NCBI Taxonomy" id="5059"/>
    <lineage>
        <taxon>Eukaryota</taxon>
        <taxon>Fungi</taxon>
        <taxon>Dikarya</taxon>
        <taxon>Ascomycota</taxon>
        <taxon>Pezizomycotina</taxon>
        <taxon>Eurotiomycetes</taxon>
        <taxon>Eurotiomycetidae</taxon>
        <taxon>Eurotiales</taxon>
        <taxon>Aspergillaceae</taxon>
        <taxon>Aspergillus</taxon>
        <taxon>Aspergillus subgen. Circumdati</taxon>
    </lineage>
</organism>